<organism>
    <name type="scientific">Eremothecium gossypii (strain ATCC 10895 / CBS 109.51 / FGSC 9923 / NRRL Y-1056)</name>
    <name type="common">Yeast</name>
    <name type="synonym">Ashbya gossypii</name>
    <dbReference type="NCBI Taxonomy" id="284811"/>
    <lineage>
        <taxon>Eukaryota</taxon>
        <taxon>Fungi</taxon>
        <taxon>Dikarya</taxon>
        <taxon>Ascomycota</taxon>
        <taxon>Saccharomycotina</taxon>
        <taxon>Saccharomycetes</taxon>
        <taxon>Saccharomycetales</taxon>
        <taxon>Saccharomycetaceae</taxon>
        <taxon>Eremothecium</taxon>
    </lineage>
</organism>
<feature type="chain" id="PRO_0000111495" description="Small ribosomal subunit protein uS9">
    <location>
        <begin position="1"/>
        <end position="143"/>
    </location>
</feature>
<feature type="region of interest" description="Disordered" evidence="1">
    <location>
        <begin position="123"/>
        <end position="143"/>
    </location>
</feature>
<feature type="compositionally biased region" description="Basic residues" evidence="1">
    <location>
        <begin position="134"/>
        <end position="143"/>
    </location>
</feature>
<reference key="1">
    <citation type="journal article" date="2004" name="Science">
        <title>The Ashbya gossypii genome as a tool for mapping the ancient Saccharomyces cerevisiae genome.</title>
        <authorList>
            <person name="Dietrich F.S."/>
            <person name="Voegeli S."/>
            <person name="Brachat S."/>
            <person name="Lerch A."/>
            <person name="Gates K."/>
            <person name="Steiner S."/>
            <person name="Mohr C."/>
            <person name="Poehlmann R."/>
            <person name="Luedi P."/>
            <person name="Choi S."/>
            <person name="Wing R.A."/>
            <person name="Flavier A."/>
            <person name="Gaffney T.D."/>
            <person name="Philippsen P."/>
        </authorList>
    </citation>
    <scope>NUCLEOTIDE SEQUENCE [LARGE SCALE GENOMIC DNA]</scope>
    <source>
        <strain>ATCC 10895 / CBS 109.51 / FGSC 9923 / NRRL Y-1056</strain>
    </source>
</reference>
<reference key="2">
    <citation type="journal article" date="2013" name="G3 (Bethesda)">
        <title>Genomes of Ashbya fungi isolated from insects reveal four mating-type loci, numerous translocations, lack of transposons, and distinct gene duplications.</title>
        <authorList>
            <person name="Dietrich F.S."/>
            <person name="Voegeli S."/>
            <person name="Kuo S."/>
            <person name="Philippsen P."/>
        </authorList>
    </citation>
    <scope>GENOME REANNOTATION</scope>
    <source>
        <strain>ATCC 10895 / CBS 109.51 / FGSC 9923 / NRRL Y-1056</strain>
    </source>
</reference>
<name>RS16_EREGS</name>
<accession>Q759L8</accession>
<keyword id="KW-1185">Reference proteome</keyword>
<keyword id="KW-0687">Ribonucleoprotein</keyword>
<keyword id="KW-0689">Ribosomal protein</keyword>
<protein>
    <recommendedName>
        <fullName evidence="2">Small ribosomal subunit protein uS9</fullName>
    </recommendedName>
    <alternativeName>
        <fullName>40S ribosomal protein S16</fullName>
    </alternativeName>
</protein>
<evidence type="ECO:0000256" key="1">
    <source>
        <dbReference type="SAM" id="MobiDB-lite"/>
    </source>
</evidence>
<evidence type="ECO:0000305" key="2"/>
<comment type="similarity">
    <text evidence="2">Belongs to the universal ribosomal protein uS9 family.</text>
</comment>
<proteinExistence type="inferred from homology"/>
<gene>
    <name type="primary">RPS16</name>
    <name type="ordered locus">ADR258W</name>
</gene>
<sequence>MSAVPSVQTFGKKKSATAVAHVKAGKGLIKVNGSPITLVQPEILRFKVYEPLLLVGLDKFANIDIRVRVTGGGHVSQVYAIRQAIAKGLVAYHQKFVDEQSKNELKKAFTSYDRTLLIADSRRPEPKKFGGRGARARFQKSYR</sequence>
<dbReference type="EMBL" id="AE016817">
    <property type="protein sequence ID" value="AAS52178.1"/>
    <property type="molecule type" value="Genomic_DNA"/>
</dbReference>
<dbReference type="RefSeq" id="NP_984354.1">
    <property type="nucleotide sequence ID" value="NM_209707.1"/>
</dbReference>
<dbReference type="SMR" id="Q759L8"/>
<dbReference type="FunCoup" id="Q759L8">
    <property type="interactions" value="852"/>
</dbReference>
<dbReference type="STRING" id="284811.Q759L8"/>
<dbReference type="EnsemblFungi" id="AAS52178">
    <property type="protein sequence ID" value="AAS52178"/>
    <property type="gene ID" value="AGOS_ADR258W"/>
</dbReference>
<dbReference type="GeneID" id="4620516"/>
<dbReference type="KEGG" id="ago:AGOS_ADR258W"/>
<dbReference type="eggNOG" id="KOG1753">
    <property type="taxonomic scope" value="Eukaryota"/>
</dbReference>
<dbReference type="HOGENOM" id="CLU_046483_4_0_1"/>
<dbReference type="InParanoid" id="Q759L8"/>
<dbReference type="OMA" id="WPIEMAR"/>
<dbReference type="OrthoDB" id="426865at2759"/>
<dbReference type="Proteomes" id="UP000000591">
    <property type="component" value="Chromosome IV"/>
</dbReference>
<dbReference type="GO" id="GO:0022627">
    <property type="term" value="C:cytosolic small ribosomal subunit"/>
    <property type="evidence" value="ECO:0000318"/>
    <property type="project" value="GO_Central"/>
</dbReference>
<dbReference type="GO" id="GO:0003723">
    <property type="term" value="F:RNA binding"/>
    <property type="evidence" value="ECO:0000318"/>
    <property type="project" value="GO_Central"/>
</dbReference>
<dbReference type="GO" id="GO:0003735">
    <property type="term" value="F:structural constituent of ribosome"/>
    <property type="evidence" value="ECO:0000318"/>
    <property type="project" value="GO_Central"/>
</dbReference>
<dbReference type="GO" id="GO:0000462">
    <property type="term" value="P:maturation of SSU-rRNA from tricistronic rRNA transcript (SSU-rRNA, 5.8S rRNA, LSU-rRNA)"/>
    <property type="evidence" value="ECO:0000318"/>
    <property type="project" value="GO_Central"/>
</dbReference>
<dbReference type="GO" id="GO:0006412">
    <property type="term" value="P:translation"/>
    <property type="evidence" value="ECO:0007669"/>
    <property type="project" value="InterPro"/>
</dbReference>
<dbReference type="FunFam" id="3.30.230.10:FF:000007">
    <property type="entry name" value="40S ribosomal protein S16"/>
    <property type="match status" value="1"/>
</dbReference>
<dbReference type="Gene3D" id="3.30.230.10">
    <property type="match status" value="1"/>
</dbReference>
<dbReference type="InterPro" id="IPR020568">
    <property type="entry name" value="Ribosomal_Su5_D2-typ_SF"/>
</dbReference>
<dbReference type="InterPro" id="IPR000754">
    <property type="entry name" value="Ribosomal_uS9"/>
</dbReference>
<dbReference type="InterPro" id="IPR020574">
    <property type="entry name" value="Ribosomal_uS9_CS"/>
</dbReference>
<dbReference type="InterPro" id="IPR014721">
    <property type="entry name" value="Ribsml_uS5_D2-typ_fold_subgr"/>
</dbReference>
<dbReference type="NCBIfam" id="NF001749">
    <property type="entry name" value="PRK00474.1"/>
    <property type="match status" value="1"/>
</dbReference>
<dbReference type="PANTHER" id="PTHR21569:SF16">
    <property type="entry name" value="RIBOSOMAL PROTEIN S16"/>
    <property type="match status" value="1"/>
</dbReference>
<dbReference type="PANTHER" id="PTHR21569">
    <property type="entry name" value="RIBOSOMAL PROTEIN S9"/>
    <property type="match status" value="1"/>
</dbReference>
<dbReference type="Pfam" id="PF00380">
    <property type="entry name" value="Ribosomal_S9"/>
    <property type="match status" value="1"/>
</dbReference>
<dbReference type="SUPFAM" id="SSF54211">
    <property type="entry name" value="Ribosomal protein S5 domain 2-like"/>
    <property type="match status" value="1"/>
</dbReference>
<dbReference type="PROSITE" id="PS00360">
    <property type="entry name" value="RIBOSOMAL_S9"/>
    <property type="match status" value="1"/>
</dbReference>